<feature type="chain" id="PRO_0000153498" description="Histidinol-phosphate aminotransferase">
    <location>
        <begin position="1"/>
        <end position="366"/>
    </location>
</feature>
<feature type="modified residue" description="N6-(pyridoxal phosphate)lysine" evidence="1">
    <location>
        <position position="226"/>
    </location>
</feature>
<name>HIS8_METBF</name>
<protein>
    <recommendedName>
        <fullName evidence="1">Histidinol-phosphate aminotransferase</fullName>
        <ecNumber evidence="1">2.6.1.9</ecNumber>
    </recommendedName>
    <alternativeName>
        <fullName evidence="1">Imidazole acetol-phosphate transaminase</fullName>
    </alternativeName>
</protein>
<dbReference type="EC" id="2.6.1.9" evidence="1"/>
<dbReference type="EMBL" id="CP000099">
    <property type="protein sequence ID" value="AAZ69846.1"/>
    <property type="molecule type" value="Genomic_DNA"/>
</dbReference>
<dbReference type="SMR" id="Q46E46"/>
<dbReference type="STRING" id="269797.Mbar_A0872"/>
<dbReference type="PaxDb" id="269797-Mbar_A0872"/>
<dbReference type="KEGG" id="mba:Mbar_A0872"/>
<dbReference type="eggNOG" id="arCOG04273">
    <property type="taxonomic scope" value="Archaea"/>
</dbReference>
<dbReference type="HOGENOM" id="CLU_017584_3_3_2"/>
<dbReference type="OrthoDB" id="9929at2157"/>
<dbReference type="UniPathway" id="UPA00031">
    <property type="reaction ID" value="UER00012"/>
</dbReference>
<dbReference type="GO" id="GO:0004400">
    <property type="term" value="F:histidinol-phosphate transaminase activity"/>
    <property type="evidence" value="ECO:0007669"/>
    <property type="project" value="UniProtKB-UniRule"/>
</dbReference>
<dbReference type="GO" id="GO:0030170">
    <property type="term" value="F:pyridoxal phosphate binding"/>
    <property type="evidence" value="ECO:0007669"/>
    <property type="project" value="InterPro"/>
</dbReference>
<dbReference type="GO" id="GO:0000105">
    <property type="term" value="P:L-histidine biosynthetic process"/>
    <property type="evidence" value="ECO:0007669"/>
    <property type="project" value="UniProtKB-UniRule"/>
</dbReference>
<dbReference type="CDD" id="cd00609">
    <property type="entry name" value="AAT_like"/>
    <property type="match status" value="1"/>
</dbReference>
<dbReference type="Gene3D" id="3.90.1150.10">
    <property type="entry name" value="Aspartate Aminotransferase, domain 1"/>
    <property type="match status" value="1"/>
</dbReference>
<dbReference type="Gene3D" id="3.40.640.10">
    <property type="entry name" value="Type I PLP-dependent aspartate aminotransferase-like (Major domain)"/>
    <property type="match status" value="1"/>
</dbReference>
<dbReference type="HAMAP" id="MF_01023">
    <property type="entry name" value="HisC_aminotrans_2"/>
    <property type="match status" value="1"/>
</dbReference>
<dbReference type="InterPro" id="IPR004839">
    <property type="entry name" value="Aminotransferase_I/II_large"/>
</dbReference>
<dbReference type="InterPro" id="IPR005861">
    <property type="entry name" value="HisP_aminotrans"/>
</dbReference>
<dbReference type="InterPro" id="IPR015424">
    <property type="entry name" value="PyrdxlP-dep_Trfase"/>
</dbReference>
<dbReference type="InterPro" id="IPR015421">
    <property type="entry name" value="PyrdxlP-dep_Trfase_major"/>
</dbReference>
<dbReference type="InterPro" id="IPR015422">
    <property type="entry name" value="PyrdxlP-dep_Trfase_small"/>
</dbReference>
<dbReference type="NCBIfam" id="TIGR01141">
    <property type="entry name" value="hisC"/>
    <property type="match status" value="1"/>
</dbReference>
<dbReference type="PANTHER" id="PTHR42885:SF2">
    <property type="entry name" value="HISTIDINOL-PHOSPHATE AMINOTRANSFERASE"/>
    <property type="match status" value="1"/>
</dbReference>
<dbReference type="PANTHER" id="PTHR42885">
    <property type="entry name" value="HISTIDINOL-PHOSPHATE AMINOTRANSFERASE-RELATED"/>
    <property type="match status" value="1"/>
</dbReference>
<dbReference type="Pfam" id="PF00155">
    <property type="entry name" value="Aminotran_1_2"/>
    <property type="match status" value="1"/>
</dbReference>
<dbReference type="SUPFAM" id="SSF53383">
    <property type="entry name" value="PLP-dependent transferases"/>
    <property type="match status" value="1"/>
</dbReference>
<proteinExistence type="inferred from homology"/>
<reference key="1">
    <citation type="journal article" date="2006" name="J. Bacteriol.">
        <title>The Methanosarcina barkeri genome: comparative analysis with Methanosarcina acetivorans and Methanosarcina mazei reveals extensive rearrangement within methanosarcinal genomes.</title>
        <authorList>
            <person name="Maeder D.L."/>
            <person name="Anderson I."/>
            <person name="Brettin T.S."/>
            <person name="Bruce D.C."/>
            <person name="Gilna P."/>
            <person name="Han C.S."/>
            <person name="Lapidus A."/>
            <person name="Metcalf W.W."/>
            <person name="Saunders E."/>
            <person name="Tapia R."/>
            <person name="Sowers K.R."/>
        </authorList>
    </citation>
    <scope>NUCLEOTIDE SEQUENCE [LARGE SCALE GENOMIC DNA]</scope>
    <source>
        <strain>Fusaro / DSM 804</strain>
    </source>
</reference>
<gene>
    <name evidence="1" type="primary">hisC</name>
    <name type="ordered locus">Mbar_A0872</name>
</gene>
<comment type="catalytic activity">
    <reaction evidence="1">
        <text>L-histidinol phosphate + 2-oxoglutarate = 3-(imidazol-4-yl)-2-oxopropyl phosphate + L-glutamate</text>
        <dbReference type="Rhea" id="RHEA:23744"/>
        <dbReference type="ChEBI" id="CHEBI:16810"/>
        <dbReference type="ChEBI" id="CHEBI:29985"/>
        <dbReference type="ChEBI" id="CHEBI:57766"/>
        <dbReference type="ChEBI" id="CHEBI:57980"/>
        <dbReference type="EC" id="2.6.1.9"/>
    </reaction>
</comment>
<comment type="cofactor">
    <cofactor evidence="1">
        <name>pyridoxal 5'-phosphate</name>
        <dbReference type="ChEBI" id="CHEBI:597326"/>
    </cofactor>
</comment>
<comment type="pathway">
    <text evidence="1">Amino-acid biosynthesis; L-histidine biosynthesis; L-histidine from 5-phospho-alpha-D-ribose 1-diphosphate: step 7/9.</text>
</comment>
<comment type="similarity">
    <text evidence="1">Belongs to the class-II pyridoxal-phosphate-dependent aminotransferase family. Histidinol-phosphate aminotransferase subfamily.</text>
</comment>
<sequence>MFLSRPELIKKEIFDIAEYVPGKSIEEIASAYGLDPASIIKLGSNENPLGPSPKAVQAMMDTAPFANIYPSADAIELREALSRYTGFPVSNLIASGPGMDGLLDGLCRLVIEKGDEVIVPTPTFAYYELPARACGGKPVFVRRSQDFSIDPEKLLEATSSRTKIIFLCSPNNPSGNLLPEKDLRKVLENTRALVFVDEAYVEFADRNLAELVREYDNLVVGRTFSKVFGLAGLRLGYGIMPEWLAKEYIRAATPFSVSLPALKAGIAALSDVEHRKKSIEIAREGRKYLKEKIPFKVYPSQANFVLVDVSPLKAKAVTQSLMKKGIIVRSCDSFRDAGDTLIRATAGTLEQNEKVVRAFETAKKEV</sequence>
<evidence type="ECO:0000255" key="1">
    <source>
        <dbReference type="HAMAP-Rule" id="MF_01023"/>
    </source>
</evidence>
<keyword id="KW-0028">Amino-acid biosynthesis</keyword>
<keyword id="KW-0032">Aminotransferase</keyword>
<keyword id="KW-0368">Histidine biosynthesis</keyword>
<keyword id="KW-0663">Pyridoxal phosphate</keyword>
<keyword id="KW-0808">Transferase</keyword>
<accession>Q46E46</accession>
<organism>
    <name type="scientific">Methanosarcina barkeri (strain Fusaro / DSM 804)</name>
    <dbReference type="NCBI Taxonomy" id="269797"/>
    <lineage>
        <taxon>Archaea</taxon>
        <taxon>Methanobacteriati</taxon>
        <taxon>Methanobacteriota</taxon>
        <taxon>Stenosarchaea group</taxon>
        <taxon>Methanomicrobia</taxon>
        <taxon>Methanosarcinales</taxon>
        <taxon>Methanosarcinaceae</taxon>
        <taxon>Methanosarcina</taxon>
    </lineage>
</organism>